<accession>A2SQU7</accession>
<gene>
    <name evidence="1" type="primary">dapB</name>
    <name type="ordered locus">Mlab_0529</name>
</gene>
<name>DAPB_METLZ</name>
<keyword id="KW-0028">Amino-acid biosynthesis</keyword>
<keyword id="KW-0963">Cytoplasm</keyword>
<keyword id="KW-0220">Diaminopimelate biosynthesis</keyword>
<keyword id="KW-0457">Lysine biosynthesis</keyword>
<keyword id="KW-0520">NAD</keyword>
<keyword id="KW-0521">NADP</keyword>
<keyword id="KW-0560">Oxidoreductase</keyword>
<keyword id="KW-1185">Reference proteome</keyword>
<dbReference type="EC" id="1.17.1.8" evidence="1"/>
<dbReference type="EMBL" id="CP000559">
    <property type="protein sequence ID" value="ABN06703.1"/>
    <property type="molecule type" value="Genomic_DNA"/>
</dbReference>
<dbReference type="RefSeq" id="WP_011832904.1">
    <property type="nucleotide sequence ID" value="NC_008942.1"/>
</dbReference>
<dbReference type="SMR" id="A2SQU7"/>
<dbReference type="STRING" id="410358.Mlab_0529"/>
<dbReference type="GeneID" id="4795079"/>
<dbReference type="KEGG" id="mla:Mlab_0529"/>
<dbReference type="eggNOG" id="arCOG04393">
    <property type="taxonomic scope" value="Archaea"/>
</dbReference>
<dbReference type="HOGENOM" id="CLU_047479_2_1_2"/>
<dbReference type="OrthoDB" id="195035at2157"/>
<dbReference type="UniPathway" id="UPA00034">
    <property type="reaction ID" value="UER00018"/>
</dbReference>
<dbReference type="Proteomes" id="UP000000365">
    <property type="component" value="Chromosome"/>
</dbReference>
<dbReference type="GO" id="GO:0005737">
    <property type="term" value="C:cytoplasm"/>
    <property type="evidence" value="ECO:0007669"/>
    <property type="project" value="UniProtKB-SubCell"/>
</dbReference>
<dbReference type="GO" id="GO:0008839">
    <property type="term" value="F:4-hydroxy-tetrahydrodipicolinate reductase"/>
    <property type="evidence" value="ECO:0007669"/>
    <property type="project" value="UniProtKB-EC"/>
</dbReference>
<dbReference type="GO" id="GO:0051287">
    <property type="term" value="F:NAD binding"/>
    <property type="evidence" value="ECO:0007669"/>
    <property type="project" value="UniProtKB-UniRule"/>
</dbReference>
<dbReference type="GO" id="GO:0050661">
    <property type="term" value="F:NADP binding"/>
    <property type="evidence" value="ECO:0007669"/>
    <property type="project" value="UniProtKB-UniRule"/>
</dbReference>
<dbReference type="GO" id="GO:0016726">
    <property type="term" value="F:oxidoreductase activity, acting on CH or CH2 groups, NAD or NADP as acceptor"/>
    <property type="evidence" value="ECO:0007669"/>
    <property type="project" value="UniProtKB-UniRule"/>
</dbReference>
<dbReference type="GO" id="GO:0019877">
    <property type="term" value="P:diaminopimelate biosynthetic process"/>
    <property type="evidence" value="ECO:0007669"/>
    <property type="project" value="UniProtKB-UniRule"/>
</dbReference>
<dbReference type="GO" id="GO:0009089">
    <property type="term" value="P:lysine biosynthetic process via diaminopimelate"/>
    <property type="evidence" value="ECO:0007669"/>
    <property type="project" value="UniProtKB-UniRule"/>
</dbReference>
<dbReference type="CDD" id="cd02274">
    <property type="entry name" value="DHDPR_N"/>
    <property type="match status" value="1"/>
</dbReference>
<dbReference type="Gene3D" id="3.30.360.10">
    <property type="entry name" value="Dihydrodipicolinate Reductase, domain 2"/>
    <property type="match status" value="1"/>
</dbReference>
<dbReference type="Gene3D" id="3.40.50.720">
    <property type="entry name" value="NAD(P)-binding Rossmann-like Domain"/>
    <property type="match status" value="1"/>
</dbReference>
<dbReference type="HAMAP" id="MF_00102">
    <property type="entry name" value="DapB"/>
    <property type="match status" value="1"/>
</dbReference>
<dbReference type="InterPro" id="IPR022663">
    <property type="entry name" value="DapB_C"/>
</dbReference>
<dbReference type="InterPro" id="IPR000846">
    <property type="entry name" value="DapB_N"/>
</dbReference>
<dbReference type="InterPro" id="IPR022664">
    <property type="entry name" value="DapB_N_CS"/>
</dbReference>
<dbReference type="InterPro" id="IPR023940">
    <property type="entry name" value="DHDPR_bac"/>
</dbReference>
<dbReference type="InterPro" id="IPR036291">
    <property type="entry name" value="NAD(P)-bd_dom_sf"/>
</dbReference>
<dbReference type="NCBIfam" id="TIGR00036">
    <property type="entry name" value="dapB"/>
    <property type="match status" value="1"/>
</dbReference>
<dbReference type="PANTHER" id="PTHR20836:SF0">
    <property type="entry name" value="4-HYDROXY-TETRAHYDRODIPICOLINATE REDUCTASE 1, CHLOROPLASTIC-RELATED"/>
    <property type="match status" value="1"/>
</dbReference>
<dbReference type="PANTHER" id="PTHR20836">
    <property type="entry name" value="DIHYDRODIPICOLINATE REDUCTASE"/>
    <property type="match status" value="1"/>
</dbReference>
<dbReference type="Pfam" id="PF05173">
    <property type="entry name" value="DapB_C"/>
    <property type="match status" value="1"/>
</dbReference>
<dbReference type="Pfam" id="PF01113">
    <property type="entry name" value="DapB_N"/>
    <property type="match status" value="1"/>
</dbReference>
<dbReference type="PIRSF" id="PIRSF000161">
    <property type="entry name" value="DHPR"/>
    <property type="match status" value="1"/>
</dbReference>
<dbReference type="SUPFAM" id="SSF55347">
    <property type="entry name" value="Glyceraldehyde-3-phosphate dehydrogenase-like, C-terminal domain"/>
    <property type="match status" value="1"/>
</dbReference>
<dbReference type="SUPFAM" id="SSF51735">
    <property type="entry name" value="NAD(P)-binding Rossmann-fold domains"/>
    <property type="match status" value="1"/>
</dbReference>
<dbReference type="PROSITE" id="PS01298">
    <property type="entry name" value="DAPB"/>
    <property type="match status" value="1"/>
</dbReference>
<proteinExistence type="inferred from homology"/>
<organism>
    <name type="scientific">Methanocorpusculum labreanum (strain ATCC 43576 / DSM 4855 / Z)</name>
    <dbReference type="NCBI Taxonomy" id="410358"/>
    <lineage>
        <taxon>Archaea</taxon>
        <taxon>Methanobacteriati</taxon>
        <taxon>Methanobacteriota</taxon>
        <taxon>Stenosarchaea group</taxon>
        <taxon>Methanomicrobia</taxon>
        <taxon>Methanomicrobiales</taxon>
        <taxon>Methanocorpusculaceae</taxon>
        <taxon>Methanocorpusculum</taxon>
    </lineage>
</organism>
<sequence>MIKVIICGALGRMGTMIANMVIENPELEFVGGVDIRDGTVLGKPVVPSEKLAAFIDEVKPDVMIDFTVAAATMINAKIAAKKGVALVIGTTGFTPEQDAELLDAIKNVPVVKTTNFSVGVNIFWELVRDAASRLGDYDIEVIEAHHRYKKDAPSGTAKTILKVIQEEVGKREEMYGREGMTERKNEIGVHVIRGGDVVGDHTVQFHQNYETIELTHRAYDRAVFARGAIRAAAWVPKAKPGVYTMKEVLGL</sequence>
<reference key="1">
    <citation type="journal article" date="2009" name="Stand. Genomic Sci.">
        <title>Complete genome sequence of Methanocorpusculum labreanum type strain Z.</title>
        <authorList>
            <person name="Anderson I.J."/>
            <person name="Sieprawska-Lupa M."/>
            <person name="Goltsman E."/>
            <person name="Lapidus A."/>
            <person name="Copeland A."/>
            <person name="Glavina Del Rio T."/>
            <person name="Tice H."/>
            <person name="Dalin E."/>
            <person name="Barry K."/>
            <person name="Pitluck S."/>
            <person name="Hauser L."/>
            <person name="Land M."/>
            <person name="Lucas S."/>
            <person name="Richardson P."/>
            <person name="Whitman W.B."/>
            <person name="Kyrpides N.C."/>
        </authorList>
    </citation>
    <scope>NUCLEOTIDE SEQUENCE [LARGE SCALE GENOMIC DNA]</scope>
    <source>
        <strain>ATCC 43576 / DSM 4855 / Z</strain>
    </source>
</reference>
<comment type="function">
    <text evidence="1">Catalyzes the conversion of 4-hydroxy-tetrahydrodipicolinate (HTPA) to tetrahydrodipicolinate.</text>
</comment>
<comment type="catalytic activity">
    <reaction evidence="1">
        <text>(S)-2,3,4,5-tetrahydrodipicolinate + NAD(+) + H2O = (2S,4S)-4-hydroxy-2,3,4,5-tetrahydrodipicolinate + NADH + H(+)</text>
        <dbReference type="Rhea" id="RHEA:35323"/>
        <dbReference type="ChEBI" id="CHEBI:15377"/>
        <dbReference type="ChEBI" id="CHEBI:15378"/>
        <dbReference type="ChEBI" id="CHEBI:16845"/>
        <dbReference type="ChEBI" id="CHEBI:57540"/>
        <dbReference type="ChEBI" id="CHEBI:57945"/>
        <dbReference type="ChEBI" id="CHEBI:67139"/>
        <dbReference type="EC" id="1.17.1.8"/>
    </reaction>
</comment>
<comment type="catalytic activity">
    <reaction evidence="1">
        <text>(S)-2,3,4,5-tetrahydrodipicolinate + NADP(+) + H2O = (2S,4S)-4-hydroxy-2,3,4,5-tetrahydrodipicolinate + NADPH + H(+)</text>
        <dbReference type="Rhea" id="RHEA:35331"/>
        <dbReference type="ChEBI" id="CHEBI:15377"/>
        <dbReference type="ChEBI" id="CHEBI:15378"/>
        <dbReference type="ChEBI" id="CHEBI:16845"/>
        <dbReference type="ChEBI" id="CHEBI:57783"/>
        <dbReference type="ChEBI" id="CHEBI:58349"/>
        <dbReference type="ChEBI" id="CHEBI:67139"/>
        <dbReference type="EC" id="1.17.1.8"/>
    </reaction>
</comment>
<comment type="pathway">
    <text evidence="1">Amino-acid biosynthesis; L-lysine biosynthesis via DAP pathway; (S)-tetrahydrodipicolinate from L-aspartate: step 4/4.</text>
</comment>
<comment type="subcellular location">
    <subcellularLocation>
        <location evidence="1">Cytoplasm</location>
    </subcellularLocation>
</comment>
<comment type="similarity">
    <text evidence="1">Belongs to the DapB family.</text>
</comment>
<comment type="caution">
    <text evidence="2">Was originally thought to be a dihydrodipicolinate reductase (DHDPR), catalyzing the conversion of dihydrodipicolinate to tetrahydrodipicolinate. However, it was shown in E.coli that the substrate of the enzymatic reaction is not dihydrodipicolinate (DHDP) but in fact (2S,4S)-4-hydroxy-2,3,4,5-tetrahydrodipicolinic acid (HTPA), the product released by the DapA-catalyzed reaction.</text>
</comment>
<evidence type="ECO:0000255" key="1">
    <source>
        <dbReference type="HAMAP-Rule" id="MF_00102"/>
    </source>
</evidence>
<evidence type="ECO:0000305" key="2"/>
<feature type="chain" id="PRO_1000008588" description="4-hydroxy-tetrahydrodipicolinate reductase">
    <location>
        <begin position="1"/>
        <end position="251"/>
    </location>
</feature>
<feature type="active site" description="Proton donor/acceptor" evidence="1">
    <location>
        <position position="145"/>
    </location>
</feature>
<feature type="active site" description="Proton donor" evidence="1">
    <location>
        <position position="149"/>
    </location>
</feature>
<feature type="binding site" evidence="1">
    <location>
        <begin position="8"/>
        <end position="13"/>
    </location>
    <ligand>
        <name>NAD(+)</name>
        <dbReference type="ChEBI" id="CHEBI:57540"/>
    </ligand>
</feature>
<feature type="binding site" evidence="1">
    <location>
        <position position="36"/>
    </location>
    <ligand>
        <name>NADP(+)</name>
        <dbReference type="ChEBI" id="CHEBI:58349"/>
    </ligand>
</feature>
<feature type="binding site" evidence="1">
    <location>
        <begin position="89"/>
        <end position="91"/>
    </location>
    <ligand>
        <name>NAD(+)</name>
        <dbReference type="ChEBI" id="CHEBI:57540"/>
    </ligand>
</feature>
<feature type="binding site" evidence="1">
    <location>
        <begin position="113"/>
        <end position="116"/>
    </location>
    <ligand>
        <name>NAD(+)</name>
        <dbReference type="ChEBI" id="CHEBI:57540"/>
    </ligand>
</feature>
<feature type="binding site" evidence="1">
    <location>
        <position position="146"/>
    </location>
    <ligand>
        <name>(S)-2,3,4,5-tetrahydrodipicolinate</name>
        <dbReference type="ChEBI" id="CHEBI:16845"/>
    </ligand>
</feature>
<feature type="binding site" evidence="1">
    <location>
        <begin position="155"/>
        <end position="156"/>
    </location>
    <ligand>
        <name>(S)-2,3,4,5-tetrahydrodipicolinate</name>
        <dbReference type="ChEBI" id="CHEBI:16845"/>
    </ligand>
</feature>
<protein>
    <recommendedName>
        <fullName evidence="1">4-hydroxy-tetrahydrodipicolinate reductase</fullName>
        <shortName evidence="1">HTPA reductase</shortName>
        <ecNumber evidence="1">1.17.1.8</ecNumber>
    </recommendedName>
</protein>